<accession>Q8FN76</accession>
<gene>
    <name evidence="1" type="primary">rplU</name>
    <name type="ordered locus">CE2271</name>
</gene>
<comment type="function">
    <text evidence="1">This protein binds to 23S rRNA in the presence of protein L20.</text>
</comment>
<comment type="subunit">
    <text evidence="1">Part of the 50S ribosomal subunit. Contacts protein L20.</text>
</comment>
<comment type="similarity">
    <text evidence="1">Belongs to the bacterial ribosomal protein bL21 family.</text>
</comment>
<reference key="1">
    <citation type="journal article" date="2003" name="Genome Res.">
        <title>Comparative complete genome sequence analysis of the amino acid replacements responsible for the thermostability of Corynebacterium efficiens.</title>
        <authorList>
            <person name="Nishio Y."/>
            <person name="Nakamura Y."/>
            <person name="Kawarabayasi Y."/>
            <person name="Usuda Y."/>
            <person name="Kimura E."/>
            <person name="Sugimoto S."/>
            <person name="Matsui K."/>
            <person name="Yamagishi A."/>
            <person name="Kikuchi H."/>
            <person name="Ikeo K."/>
            <person name="Gojobori T."/>
        </authorList>
    </citation>
    <scope>NUCLEOTIDE SEQUENCE [LARGE SCALE GENOMIC DNA]</scope>
    <source>
        <strain>DSM 44549 / YS-314 / AJ 12310 / JCM 11189 / NBRC 100395</strain>
    </source>
</reference>
<feature type="chain" id="PRO_0000270656" description="Large ribosomal subunit protein bL21">
    <location>
        <begin position="1"/>
        <end position="101"/>
    </location>
</feature>
<sequence length="101" mass="10890">MYAIVKTGGKQYKVAEGDLVKVEKIEGEPGASVALTPVLLVDGADVTTAADKLASVSVNTEIVEHTKGPKIKILKYKNKTGYKKRQGHRQKLTVLKVTGIK</sequence>
<dbReference type="EMBL" id="BA000035">
    <property type="protein sequence ID" value="BAC19081.1"/>
    <property type="molecule type" value="Genomic_DNA"/>
</dbReference>
<dbReference type="RefSeq" id="WP_006768275.1">
    <property type="nucleotide sequence ID" value="NZ_GG700683.1"/>
</dbReference>
<dbReference type="SMR" id="Q8FN76"/>
<dbReference type="STRING" id="196164.gene:10742702"/>
<dbReference type="KEGG" id="cef:CE2271"/>
<dbReference type="eggNOG" id="COG0261">
    <property type="taxonomic scope" value="Bacteria"/>
</dbReference>
<dbReference type="HOGENOM" id="CLU_061463_3_0_11"/>
<dbReference type="OrthoDB" id="9813334at2"/>
<dbReference type="Proteomes" id="UP000001409">
    <property type="component" value="Chromosome"/>
</dbReference>
<dbReference type="GO" id="GO:0005737">
    <property type="term" value="C:cytoplasm"/>
    <property type="evidence" value="ECO:0007669"/>
    <property type="project" value="UniProtKB-ARBA"/>
</dbReference>
<dbReference type="GO" id="GO:1990904">
    <property type="term" value="C:ribonucleoprotein complex"/>
    <property type="evidence" value="ECO:0007669"/>
    <property type="project" value="UniProtKB-KW"/>
</dbReference>
<dbReference type="GO" id="GO:0005840">
    <property type="term" value="C:ribosome"/>
    <property type="evidence" value="ECO:0007669"/>
    <property type="project" value="UniProtKB-KW"/>
</dbReference>
<dbReference type="GO" id="GO:0019843">
    <property type="term" value="F:rRNA binding"/>
    <property type="evidence" value="ECO:0007669"/>
    <property type="project" value="UniProtKB-UniRule"/>
</dbReference>
<dbReference type="GO" id="GO:0003735">
    <property type="term" value="F:structural constituent of ribosome"/>
    <property type="evidence" value="ECO:0007669"/>
    <property type="project" value="InterPro"/>
</dbReference>
<dbReference type="GO" id="GO:0006412">
    <property type="term" value="P:translation"/>
    <property type="evidence" value="ECO:0007669"/>
    <property type="project" value="UniProtKB-UniRule"/>
</dbReference>
<dbReference type="HAMAP" id="MF_01363">
    <property type="entry name" value="Ribosomal_bL21"/>
    <property type="match status" value="1"/>
</dbReference>
<dbReference type="InterPro" id="IPR028909">
    <property type="entry name" value="bL21-like"/>
</dbReference>
<dbReference type="InterPro" id="IPR036164">
    <property type="entry name" value="bL21-like_sf"/>
</dbReference>
<dbReference type="InterPro" id="IPR001787">
    <property type="entry name" value="Ribosomal_bL21"/>
</dbReference>
<dbReference type="InterPro" id="IPR018258">
    <property type="entry name" value="Ribosomal_bL21_CS"/>
</dbReference>
<dbReference type="NCBIfam" id="TIGR00061">
    <property type="entry name" value="L21"/>
    <property type="match status" value="1"/>
</dbReference>
<dbReference type="PANTHER" id="PTHR21349">
    <property type="entry name" value="50S RIBOSOMAL PROTEIN L21"/>
    <property type="match status" value="1"/>
</dbReference>
<dbReference type="PANTHER" id="PTHR21349:SF0">
    <property type="entry name" value="LARGE RIBOSOMAL SUBUNIT PROTEIN BL21M"/>
    <property type="match status" value="1"/>
</dbReference>
<dbReference type="Pfam" id="PF00829">
    <property type="entry name" value="Ribosomal_L21p"/>
    <property type="match status" value="1"/>
</dbReference>
<dbReference type="SUPFAM" id="SSF141091">
    <property type="entry name" value="L21p-like"/>
    <property type="match status" value="1"/>
</dbReference>
<dbReference type="PROSITE" id="PS01169">
    <property type="entry name" value="RIBOSOMAL_L21"/>
    <property type="match status" value="1"/>
</dbReference>
<proteinExistence type="inferred from homology"/>
<evidence type="ECO:0000255" key="1">
    <source>
        <dbReference type="HAMAP-Rule" id="MF_01363"/>
    </source>
</evidence>
<evidence type="ECO:0000305" key="2"/>
<keyword id="KW-1185">Reference proteome</keyword>
<keyword id="KW-0687">Ribonucleoprotein</keyword>
<keyword id="KW-0689">Ribosomal protein</keyword>
<keyword id="KW-0694">RNA-binding</keyword>
<keyword id="KW-0699">rRNA-binding</keyword>
<organism>
    <name type="scientific">Corynebacterium efficiens (strain DSM 44549 / YS-314 / AJ 12310 / JCM 11189 / NBRC 100395)</name>
    <dbReference type="NCBI Taxonomy" id="196164"/>
    <lineage>
        <taxon>Bacteria</taxon>
        <taxon>Bacillati</taxon>
        <taxon>Actinomycetota</taxon>
        <taxon>Actinomycetes</taxon>
        <taxon>Mycobacteriales</taxon>
        <taxon>Corynebacteriaceae</taxon>
        <taxon>Corynebacterium</taxon>
    </lineage>
</organism>
<name>RL21_COREF</name>
<protein>
    <recommendedName>
        <fullName evidence="1">Large ribosomal subunit protein bL21</fullName>
    </recommendedName>
    <alternativeName>
        <fullName evidence="2">50S ribosomal protein L21</fullName>
    </alternativeName>
</protein>